<reference key="1">
    <citation type="journal article" date="2011" name="Stand. Genomic Sci.">
        <title>Complete genome sequence of the halophilic and highly halotolerant Chromohalobacter salexigens type strain (1H11(T)).</title>
        <authorList>
            <person name="Copeland A."/>
            <person name="O'Connor K."/>
            <person name="Lucas S."/>
            <person name="Lapidus A."/>
            <person name="Berry K.W."/>
            <person name="Detter J.C."/>
            <person name="Del Rio T.G."/>
            <person name="Hammon N."/>
            <person name="Dalin E."/>
            <person name="Tice H."/>
            <person name="Pitluck S."/>
            <person name="Bruce D."/>
            <person name="Goodwin L."/>
            <person name="Han C."/>
            <person name="Tapia R."/>
            <person name="Saunders E."/>
            <person name="Schmutz J."/>
            <person name="Brettin T."/>
            <person name="Larimer F."/>
            <person name="Land M."/>
            <person name="Hauser L."/>
            <person name="Vargas C."/>
            <person name="Nieto J.J."/>
            <person name="Kyrpides N.C."/>
            <person name="Ivanova N."/>
            <person name="Goker M."/>
            <person name="Klenk H.P."/>
            <person name="Csonka L.N."/>
            <person name="Woyke T."/>
        </authorList>
    </citation>
    <scope>NUCLEOTIDE SEQUENCE [LARGE SCALE GENOMIC DNA]</scope>
    <source>
        <strain>ATCC BAA-138 / DSM 3043 / CIP 106854 / NCIMB 13768 / 1H11</strain>
    </source>
</reference>
<evidence type="ECO:0000255" key="1">
    <source>
        <dbReference type="HAMAP-Rule" id="MF_00087"/>
    </source>
</evidence>
<dbReference type="EC" id="1.2.1.70" evidence="1"/>
<dbReference type="EMBL" id="CP000285">
    <property type="protein sequence ID" value="ABE58881.1"/>
    <property type="molecule type" value="Genomic_DNA"/>
</dbReference>
<dbReference type="RefSeq" id="WP_011506827.1">
    <property type="nucleotide sequence ID" value="NC_007963.1"/>
</dbReference>
<dbReference type="SMR" id="Q1QXC7"/>
<dbReference type="STRING" id="290398.Csal_1528"/>
<dbReference type="GeneID" id="95334259"/>
<dbReference type="KEGG" id="csa:Csal_1528"/>
<dbReference type="eggNOG" id="COG0373">
    <property type="taxonomic scope" value="Bacteria"/>
</dbReference>
<dbReference type="HOGENOM" id="CLU_035113_2_2_6"/>
<dbReference type="OrthoDB" id="110209at2"/>
<dbReference type="UniPathway" id="UPA00251">
    <property type="reaction ID" value="UER00316"/>
</dbReference>
<dbReference type="Proteomes" id="UP000000239">
    <property type="component" value="Chromosome"/>
</dbReference>
<dbReference type="GO" id="GO:0008883">
    <property type="term" value="F:glutamyl-tRNA reductase activity"/>
    <property type="evidence" value="ECO:0007669"/>
    <property type="project" value="UniProtKB-UniRule"/>
</dbReference>
<dbReference type="GO" id="GO:0050661">
    <property type="term" value="F:NADP binding"/>
    <property type="evidence" value="ECO:0007669"/>
    <property type="project" value="InterPro"/>
</dbReference>
<dbReference type="GO" id="GO:0019353">
    <property type="term" value="P:protoporphyrinogen IX biosynthetic process from glutamate"/>
    <property type="evidence" value="ECO:0007669"/>
    <property type="project" value="TreeGrafter"/>
</dbReference>
<dbReference type="CDD" id="cd05213">
    <property type="entry name" value="NAD_bind_Glutamyl_tRNA_reduct"/>
    <property type="match status" value="1"/>
</dbReference>
<dbReference type="FunFam" id="3.30.460.30:FF:000001">
    <property type="entry name" value="Glutamyl-tRNA reductase"/>
    <property type="match status" value="1"/>
</dbReference>
<dbReference type="FunFam" id="3.40.50.720:FF:000031">
    <property type="entry name" value="Glutamyl-tRNA reductase"/>
    <property type="match status" value="1"/>
</dbReference>
<dbReference type="Gene3D" id="3.30.460.30">
    <property type="entry name" value="Glutamyl-tRNA reductase, N-terminal domain"/>
    <property type="match status" value="1"/>
</dbReference>
<dbReference type="Gene3D" id="3.40.50.720">
    <property type="entry name" value="NAD(P)-binding Rossmann-like Domain"/>
    <property type="match status" value="1"/>
</dbReference>
<dbReference type="HAMAP" id="MF_00087">
    <property type="entry name" value="Glu_tRNA_reductase"/>
    <property type="match status" value="1"/>
</dbReference>
<dbReference type="InterPro" id="IPR000343">
    <property type="entry name" value="4pyrrol_synth_GluRdtase"/>
</dbReference>
<dbReference type="InterPro" id="IPR015896">
    <property type="entry name" value="4pyrrol_synth_GluRdtase_dimer"/>
</dbReference>
<dbReference type="InterPro" id="IPR015895">
    <property type="entry name" value="4pyrrol_synth_GluRdtase_N"/>
</dbReference>
<dbReference type="InterPro" id="IPR018214">
    <property type="entry name" value="GluRdtase_CS"/>
</dbReference>
<dbReference type="InterPro" id="IPR036453">
    <property type="entry name" value="GluRdtase_dimer_dom_sf"/>
</dbReference>
<dbReference type="InterPro" id="IPR036343">
    <property type="entry name" value="GluRdtase_N_sf"/>
</dbReference>
<dbReference type="InterPro" id="IPR036291">
    <property type="entry name" value="NAD(P)-bd_dom_sf"/>
</dbReference>
<dbReference type="InterPro" id="IPR006151">
    <property type="entry name" value="Shikm_DH/Glu-tRNA_Rdtase"/>
</dbReference>
<dbReference type="NCBIfam" id="TIGR01035">
    <property type="entry name" value="hemA"/>
    <property type="match status" value="1"/>
</dbReference>
<dbReference type="PANTHER" id="PTHR43013">
    <property type="entry name" value="GLUTAMYL-TRNA REDUCTASE"/>
    <property type="match status" value="1"/>
</dbReference>
<dbReference type="PANTHER" id="PTHR43013:SF1">
    <property type="entry name" value="GLUTAMYL-TRNA REDUCTASE"/>
    <property type="match status" value="1"/>
</dbReference>
<dbReference type="Pfam" id="PF00745">
    <property type="entry name" value="GlutR_dimer"/>
    <property type="match status" value="1"/>
</dbReference>
<dbReference type="Pfam" id="PF05201">
    <property type="entry name" value="GlutR_N"/>
    <property type="match status" value="1"/>
</dbReference>
<dbReference type="Pfam" id="PF01488">
    <property type="entry name" value="Shikimate_DH"/>
    <property type="match status" value="1"/>
</dbReference>
<dbReference type="PIRSF" id="PIRSF000445">
    <property type="entry name" value="4pyrrol_synth_GluRdtase"/>
    <property type="match status" value="1"/>
</dbReference>
<dbReference type="SUPFAM" id="SSF69742">
    <property type="entry name" value="Glutamyl tRNA-reductase catalytic, N-terminal domain"/>
    <property type="match status" value="1"/>
</dbReference>
<dbReference type="SUPFAM" id="SSF69075">
    <property type="entry name" value="Glutamyl tRNA-reductase dimerization domain"/>
    <property type="match status" value="1"/>
</dbReference>
<dbReference type="SUPFAM" id="SSF51735">
    <property type="entry name" value="NAD(P)-binding Rossmann-fold domains"/>
    <property type="match status" value="1"/>
</dbReference>
<dbReference type="PROSITE" id="PS00747">
    <property type="entry name" value="GLUTR"/>
    <property type="match status" value="1"/>
</dbReference>
<protein>
    <recommendedName>
        <fullName evidence="1">Glutamyl-tRNA reductase</fullName>
        <shortName evidence="1">GluTR</shortName>
        <ecNumber evidence="1">1.2.1.70</ecNumber>
    </recommendedName>
</protein>
<keyword id="KW-0521">NADP</keyword>
<keyword id="KW-0560">Oxidoreductase</keyword>
<keyword id="KW-0627">Porphyrin biosynthesis</keyword>
<keyword id="KW-1185">Reference proteome</keyword>
<gene>
    <name evidence="1" type="primary">hemA</name>
    <name type="ordered locus">Csal_1528</name>
</gene>
<comment type="function">
    <text evidence="1">Catalyzes the NADPH-dependent reduction of glutamyl-tRNA(Glu) to glutamate 1-semialdehyde (GSA).</text>
</comment>
<comment type="catalytic activity">
    <reaction evidence="1">
        <text>(S)-4-amino-5-oxopentanoate + tRNA(Glu) + NADP(+) = L-glutamyl-tRNA(Glu) + NADPH + H(+)</text>
        <dbReference type="Rhea" id="RHEA:12344"/>
        <dbReference type="Rhea" id="RHEA-COMP:9663"/>
        <dbReference type="Rhea" id="RHEA-COMP:9680"/>
        <dbReference type="ChEBI" id="CHEBI:15378"/>
        <dbReference type="ChEBI" id="CHEBI:57501"/>
        <dbReference type="ChEBI" id="CHEBI:57783"/>
        <dbReference type="ChEBI" id="CHEBI:58349"/>
        <dbReference type="ChEBI" id="CHEBI:78442"/>
        <dbReference type="ChEBI" id="CHEBI:78520"/>
        <dbReference type="EC" id="1.2.1.70"/>
    </reaction>
</comment>
<comment type="pathway">
    <text evidence="1">Porphyrin-containing compound metabolism; protoporphyrin-IX biosynthesis; 5-aminolevulinate from L-glutamyl-tRNA(Glu): step 1/2.</text>
</comment>
<comment type="subunit">
    <text evidence="1">Homodimer.</text>
</comment>
<comment type="domain">
    <text evidence="1">Possesses an unusual extended V-shaped dimeric structure with each monomer consisting of three distinct domains arranged along a curved 'spinal' alpha-helix. The N-terminal catalytic domain specifically recognizes the glutamate moiety of the substrate. The second domain is the NADPH-binding domain, and the third C-terminal domain is responsible for dimerization.</text>
</comment>
<comment type="miscellaneous">
    <text evidence="1">During catalysis, the active site Cys acts as a nucleophile attacking the alpha-carbonyl group of tRNA-bound glutamate with the formation of a thioester intermediate between enzyme and glutamate, and the concomitant release of tRNA(Glu). The thioester intermediate is finally reduced by direct hydride transfer from NADPH, to form the product GSA.</text>
</comment>
<comment type="similarity">
    <text evidence="1">Belongs to the glutamyl-tRNA reductase family.</text>
</comment>
<organism>
    <name type="scientific">Chromohalobacter salexigens (strain ATCC BAA-138 / DSM 3043 / CIP 106854 / NCIMB 13768 / 1H11)</name>
    <dbReference type="NCBI Taxonomy" id="290398"/>
    <lineage>
        <taxon>Bacteria</taxon>
        <taxon>Pseudomonadati</taxon>
        <taxon>Pseudomonadota</taxon>
        <taxon>Gammaproteobacteria</taxon>
        <taxon>Oceanospirillales</taxon>
        <taxon>Halomonadaceae</taxon>
        <taxon>Chromohalobacter</taxon>
    </lineage>
</organism>
<proteinExistence type="inferred from homology"/>
<accession>Q1QXC7</accession>
<name>HEM1_CHRSD</name>
<sequence length="424" mass="46560">MTLLALGINHKTATIEVREQVAFTPAELAGALAELKSLPGVNEAAVLSTCNRTELYCVTDSQGEREVLDWLGRFHALPPETLMQSAYHYLDGEAARHLMRVAAGLDSMVLGEPQILGQLKEAYQLARDNAGLGGELERLFQHTFSVAKQVRSETGIGENPVSVAYAAVSLASHIFDDFGRARALLIGAGETIELVARHLREAGIRGLTVANRTRERAELLAHEVDAEAISLGEIPQALAHADIIISSTASPLPILGKGMVESALKKRRHRPMFMVDIAVPRDIESQVGELDDVFLYSVDDLQEVIEENRKQRAVAAAQAESLIEHGIQHWQHERRVRGAGDLIRRYREQGEALREEAERQALAQLARGEDPEKVLQRLSRQLTNKLLHGPTLRLREASGEARHDILKAADTLLIDPAASTQDSA</sequence>
<feature type="chain" id="PRO_1000004610" description="Glutamyl-tRNA reductase">
    <location>
        <begin position="1"/>
        <end position="424"/>
    </location>
</feature>
<feature type="active site" description="Nucleophile" evidence="1">
    <location>
        <position position="50"/>
    </location>
</feature>
<feature type="binding site" evidence="1">
    <location>
        <begin position="49"/>
        <end position="52"/>
    </location>
    <ligand>
        <name>substrate</name>
    </ligand>
</feature>
<feature type="binding site" evidence="1">
    <location>
        <position position="107"/>
    </location>
    <ligand>
        <name>substrate</name>
    </ligand>
</feature>
<feature type="binding site" evidence="1">
    <location>
        <begin position="112"/>
        <end position="114"/>
    </location>
    <ligand>
        <name>substrate</name>
    </ligand>
</feature>
<feature type="binding site" evidence="1">
    <location>
        <position position="118"/>
    </location>
    <ligand>
        <name>substrate</name>
    </ligand>
</feature>
<feature type="binding site" evidence="1">
    <location>
        <begin position="187"/>
        <end position="192"/>
    </location>
    <ligand>
        <name>NADP(+)</name>
        <dbReference type="ChEBI" id="CHEBI:58349"/>
    </ligand>
</feature>
<feature type="site" description="Important for activity" evidence="1">
    <location>
        <position position="97"/>
    </location>
</feature>